<proteinExistence type="inferred from homology"/>
<name>TRUB_VIBVU</name>
<feature type="chain" id="PRO_0000121941" description="tRNA pseudouridine synthase B">
    <location>
        <begin position="1"/>
        <end position="314"/>
    </location>
</feature>
<feature type="active site" description="Nucleophile" evidence="1">
    <location>
        <position position="47"/>
    </location>
</feature>
<dbReference type="EC" id="5.4.99.25" evidence="1"/>
<dbReference type="EMBL" id="AE016795">
    <property type="protein sequence ID" value="AAO10114.1"/>
    <property type="molecule type" value="Genomic_DNA"/>
</dbReference>
<dbReference type="RefSeq" id="WP_011079618.1">
    <property type="nucleotide sequence ID" value="NC_004459.3"/>
</dbReference>
<dbReference type="SMR" id="Q8DBV8"/>
<dbReference type="KEGG" id="vvu:VV1_1698"/>
<dbReference type="HOGENOM" id="CLU_032087_0_3_6"/>
<dbReference type="Proteomes" id="UP000002275">
    <property type="component" value="Chromosome 1"/>
</dbReference>
<dbReference type="GO" id="GO:0003723">
    <property type="term" value="F:RNA binding"/>
    <property type="evidence" value="ECO:0007669"/>
    <property type="project" value="InterPro"/>
</dbReference>
<dbReference type="GO" id="GO:0160148">
    <property type="term" value="F:tRNA pseudouridine(55) synthase activity"/>
    <property type="evidence" value="ECO:0007669"/>
    <property type="project" value="UniProtKB-EC"/>
</dbReference>
<dbReference type="GO" id="GO:1990481">
    <property type="term" value="P:mRNA pseudouridine synthesis"/>
    <property type="evidence" value="ECO:0007669"/>
    <property type="project" value="TreeGrafter"/>
</dbReference>
<dbReference type="GO" id="GO:0031119">
    <property type="term" value="P:tRNA pseudouridine synthesis"/>
    <property type="evidence" value="ECO:0007669"/>
    <property type="project" value="UniProtKB-UniRule"/>
</dbReference>
<dbReference type="CDD" id="cd02573">
    <property type="entry name" value="PseudoU_synth_EcTruB"/>
    <property type="match status" value="1"/>
</dbReference>
<dbReference type="CDD" id="cd21152">
    <property type="entry name" value="PUA_TruB_bacterial"/>
    <property type="match status" value="1"/>
</dbReference>
<dbReference type="FunFam" id="2.30.130.10:FF:000004">
    <property type="entry name" value="tRNA pseudouridine synthase B"/>
    <property type="match status" value="1"/>
</dbReference>
<dbReference type="FunFam" id="3.30.2350.10:FF:000003">
    <property type="entry name" value="tRNA pseudouridine synthase B"/>
    <property type="match status" value="1"/>
</dbReference>
<dbReference type="Gene3D" id="3.30.2350.10">
    <property type="entry name" value="Pseudouridine synthase"/>
    <property type="match status" value="1"/>
</dbReference>
<dbReference type="Gene3D" id="2.30.130.10">
    <property type="entry name" value="PUA domain"/>
    <property type="match status" value="1"/>
</dbReference>
<dbReference type="HAMAP" id="MF_01080">
    <property type="entry name" value="TruB_bact"/>
    <property type="match status" value="1"/>
</dbReference>
<dbReference type="InterPro" id="IPR020103">
    <property type="entry name" value="PsdUridine_synth_cat_dom_sf"/>
</dbReference>
<dbReference type="InterPro" id="IPR002501">
    <property type="entry name" value="PsdUridine_synth_N"/>
</dbReference>
<dbReference type="InterPro" id="IPR015947">
    <property type="entry name" value="PUA-like_sf"/>
</dbReference>
<dbReference type="InterPro" id="IPR036974">
    <property type="entry name" value="PUA_sf"/>
</dbReference>
<dbReference type="InterPro" id="IPR014780">
    <property type="entry name" value="tRNA_psdUridine_synth_TruB"/>
</dbReference>
<dbReference type="InterPro" id="IPR015240">
    <property type="entry name" value="tRNA_sdUridine_synth_fam1_C"/>
</dbReference>
<dbReference type="InterPro" id="IPR032819">
    <property type="entry name" value="TruB_C"/>
</dbReference>
<dbReference type="NCBIfam" id="TIGR00431">
    <property type="entry name" value="TruB"/>
    <property type="match status" value="1"/>
</dbReference>
<dbReference type="PANTHER" id="PTHR13767:SF2">
    <property type="entry name" value="PSEUDOURIDYLATE SYNTHASE TRUB1"/>
    <property type="match status" value="1"/>
</dbReference>
<dbReference type="PANTHER" id="PTHR13767">
    <property type="entry name" value="TRNA-PSEUDOURIDINE SYNTHASE"/>
    <property type="match status" value="1"/>
</dbReference>
<dbReference type="Pfam" id="PF09157">
    <property type="entry name" value="TruB-C_2"/>
    <property type="match status" value="1"/>
</dbReference>
<dbReference type="Pfam" id="PF16198">
    <property type="entry name" value="TruB_C_2"/>
    <property type="match status" value="1"/>
</dbReference>
<dbReference type="Pfam" id="PF01509">
    <property type="entry name" value="TruB_N"/>
    <property type="match status" value="1"/>
</dbReference>
<dbReference type="SUPFAM" id="SSF55120">
    <property type="entry name" value="Pseudouridine synthase"/>
    <property type="match status" value="1"/>
</dbReference>
<dbReference type="SUPFAM" id="SSF88697">
    <property type="entry name" value="PUA domain-like"/>
    <property type="match status" value="1"/>
</dbReference>
<accession>Q8DBV8</accession>
<protein>
    <recommendedName>
        <fullName evidence="1">tRNA pseudouridine synthase B</fullName>
        <ecNumber evidence="1">5.4.99.25</ecNumber>
    </recommendedName>
    <alternativeName>
        <fullName evidence="1">tRNA pseudouridine(55) synthase</fullName>
        <shortName evidence="1">Psi55 synthase</shortName>
    </alternativeName>
    <alternativeName>
        <fullName evidence="1">tRNA pseudouridylate synthase</fullName>
    </alternativeName>
    <alternativeName>
        <fullName evidence="1">tRNA-uridine isomerase</fullName>
    </alternativeName>
</protein>
<reference key="1">
    <citation type="submission" date="2002-12" db="EMBL/GenBank/DDBJ databases">
        <title>Complete genome sequence of Vibrio vulnificus CMCP6.</title>
        <authorList>
            <person name="Rhee J.H."/>
            <person name="Kim S.Y."/>
            <person name="Chung S.S."/>
            <person name="Kim J.J."/>
            <person name="Moon Y.H."/>
            <person name="Jeong H."/>
            <person name="Choy H.E."/>
        </authorList>
    </citation>
    <scope>NUCLEOTIDE SEQUENCE [LARGE SCALE GENOMIC DNA]</scope>
    <source>
        <strain>CMCP6</strain>
    </source>
</reference>
<gene>
    <name evidence="1" type="primary">truB</name>
    <name type="ordered locus">VV1_1698</name>
</gene>
<comment type="function">
    <text evidence="1">Responsible for synthesis of pseudouridine from uracil-55 in the psi GC loop of transfer RNAs.</text>
</comment>
<comment type="catalytic activity">
    <reaction evidence="1">
        <text>uridine(55) in tRNA = pseudouridine(55) in tRNA</text>
        <dbReference type="Rhea" id="RHEA:42532"/>
        <dbReference type="Rhea" id="RHEA-COMP:10101"/>
        <dbReference type="Rhea" id="RHEA-COMP:10102"/>
        <dbReference type="ChEBI" id="CHEBI:65314"/>
        <dbReference type="ChEBI" id="CHEBI:65315"/>
        <dbReference type="EC" id="5.4.99.25"/>
    </reaction>
</comment>
<comment type="similarity">
    <text evidence="1">Belongs to the pseudouridine synthase TruB family. Type 1 subfamily.</text>
</comment>
<organism>
    <name type="scientific">Vibrio vulnificus (strain CMCP6)</name>
    <dbReference type="NCBI Taxonomy" id="216895"/>
    <lineage>
        <taxon>Bacteria</taxon>
        <taxon>Pseudomonadati</taxon>
        <taxon>Pseudomonadota</taxon>
        <taxon>Gammaproteobacteria</taxon>
        <taxon>Vibrionales</taxon>
        <taxon>Vibrionaceae</taxon>
        <taxon>Vibrio</taxon>
    </lineage>
</organism>
<keyword id="KW-0413">Isomerase</keyword>
<keyword id="KW-0819">tRNA processing</keyword>
<evidence type="ECO:0000255" key="1">
    <source>
        <dbReference type="HAMAP-Rule" id="MF_01080"/>
    </source>
</evidence>
<sequence length="314" mass="35106">MARRRKGRPIDGVILLDKPTGMSSNDALQKVKRLYFAEKAGHTGALDPLATGMLPICLGEATKFSQFLLDSDKRYRVIAKLGERTDTSDSDGDVVETRPVNVTLETLEACIEKFRGESDQVPSMFSALKYQGKPLYEYARKGIEVPRESRKITVYEITLHRFEGEEVEMEVHCSKGTYIRTIVDDLGEMLGCGAHVTMLRRTGVAKYPYENMVTLEQLNELVDNANRDGVAPREVLDPLLMPMDTAVEDLPEVNLIADLADMVMHGQAVQVLGAPTEGQLRLTMGEERRFIGVGEMNRDGKIAPKRLVVFRDEE</sequence>